<organism>
    <name type="scientific">Colocasia esculenta</name>
    <name type="common">Wild taro</name>
    <name type="synonym">Arum esculentum</name>
    <dbReference type="NCBI Taxonomy" id="4460"/>
    <lineage>
        <taxon>Eukaryota</taxon>
        <taxon>Viridiplantae</taxon>
        <taxon>Streptophyta</taxon>
        <taxon>Embryophyta</taxon>
        <taxon>Tracheophyta</taxon>
        <taxon>Spermatophyta</taxon>
        <taxon>Magnoliopsida</taxon>
        <taxon>Liliopsida</taxon>
        <taxon>Araceae</taxon>
        <taxon>Aroideae</taxon>
        <taxon>Colocasieae</taxon>
        <taxon>Colocasia</taxon>
    </lineage>
</organism>
<gene>
    <name evidence="6" type="primary">TAR1</name>
</gene>
<dbReference type="EMBL" id="X76111">
    <property type="protein sequence ID" value="CAA53717.1"/>
    <property type="status" value="ALT_SEQ"/>
    <property type="molecule type" value="Genomic_DNA"/>
</dbReference>
<dbReference type="SMR" id="Q43418"/>
<dbReference type="GO" id="GO:0005576">
    <property type="term" value="C:extracellular region"/>
    <property type="evidence" value="ECO:0007669"/>
    <property type="project" value="UniProtKB-SubCell"/>
</dbReference>
<dbReference type="GO" id="GO:0005537">
    <property type="term" value="F:D-mannose binding"/>
    <property type="evidence" value="ECO:0007669"/>
    <property type="project" value="UniProtKB-KW"/>
</dbReference>
<dbReference type="GO" id="GO:0051707">
    <property type="term" value="P:response to other organism"/>
    <property type="evidence" value="ECO:0007669"/>
    <property type="project" value="UniProtKB-ARBA"/>
</dbReference>
<dbReference type="CDD" id="cd00028">
    <property type="entry name" value="B_lectin"/>
    <property type="match status" value="1"/>
</dbReference>
<dbReference type="Gene3D" id="2.90.10.10">
    <property type="entry name" value="Bulb-type lectin domain"/>
    <property type="match status" value="2"/>
</dbReference>
<dbReference type="InterPro" id="IPR001480">
    <property type="entry name" value="Bulb-type_lectin_dom"/>
</dbReference>
<dbReference type="InterPro" id="IPR036426">
    <property type="entry name" value="Bulb-type_lectin_dom_sf"/>
</dbReference>
<dbReference type="SMART" id="SM00108">
    <property type="entry name" value="B_lectin"/>
    <property type="match status" value="2"/>
</dbReference>
<dbReference type="SUPFAM" id="SSF51110">
    <property type="entry name" value="alpha-D-mannose-specific plant lectins"/>
    <property type="match status" value="2"/>
</dbReference>
<dbReference type="PROSITE" id="PS50927">
    <property type="entry name" value="BULB_LECTIN"/>
    <property type="match status" value="2"/>
</dbReference>
<protein>
    <recommendedName>
        <fullName evidence="7">Mannose-specific lectin TAR1</fullName>
    </recommendedName>
    <alternativeName>
        <fullName evidence="7">Agglutinin</fullName>
    </alternativeName>
    <alternativeName>
        <fullName evidence="6">Tarin</fullName>
    </alternativeName>
    <component>
        <recommendedName>
            <fullName evidence="7">Mannose-specific lectin TAR1 chain 1</fullName>
        </recommendedName>
    </component>
    <component>
        <recommendedName>
            <fullName evidence="7">Mannose-specific lectin TAR1 chain 2</fullName>
        </recommendedName>
    </component>
</protein>
<sequence>MAKLLLFLLPAILGLLIPRSAVALGTNYLLSGQTLNTDGHLKNGDFDLVMQNDCNLVLYNGNWQSNTANNGRDCKLTLTDYGDLVIKNRDGSTVWRSRAKSVKGNYAAVLHPDGRLVVFGPSVFKNDPWVPGLNSLAFRNIPFTDNLLFSPQVLYGDGRLTAKNHQLVMQGDCNLVLYGGKYGWQSNTHGNGEHCFLRLNHKGELIIKDDDFKTIWSSSSSSKQGDYVL</sequence>
<keyword id="KW-0903">Direct protein sequencing</keyword>
<keyword id="KW-1015">Disulfide bond</keyword>
<keyword id="KW-0348">Hemagglutinin</keyword>
<keyword id="KW-0430">Lectin</keyword>
<keyword id="KW-0465">Mannose-binding</keyword>
<keyword id="KW-0677">Repeat</keyword>
<keyword id="KW-0964">Secreted</keyword>
<keyword id="KW-0732">Signal</keyword>
<name>TAR1_COLES</name>
<feature type="signal peptide" evidence="5">
    <location>
        <begin position="1"/>
        <end position="23"/>
    </location>
</feature>
<feature type="chain" id="PRO_5004231857" description="Mannose-specific lectin TAR1 chain 1">
    <location>
        <begin position="24"/>
        <end position="139"/>
    </location>
</feature>
<feature type="chain" id="PRO_0000450781" description="Mannose-specific lectin TAR1 chain 2">
    <location>
        <begin position="140"/>
        <end position="229"/>
    </location>
</feature>
<feature type="domain" description="Bulb-type lectin 1" evidence="4">
    <location>
        <begin position="26"/>
        <end position="131"/>
    </location>
</feature>
<feature type="domain" description="Bulb-type lectin 2" evidence="4">
    <location>
        <begin position="145"/>
        <end position="229"/>
    </location>
</feature>
<feature type="short sequence motif" description="Carbohydrate-binding motif 1" evidence="7">
    <location>
        <begin position="51"/>
        <end position="59"/>
    </location>
</feature>
<feature type="short sequence motif" description="Carbohydrate-binding motif 2" evidence="7">
    <location>
        <begin position="170"/>
        <end position="178"/>
    </location>
</feature>
<feature type="binding site" evidence="1">
    <location>
        <begin position="51"/>
        <end position="55"/>
    </location>
    <ligand>
        <name>beta-D-mannose</name>
        <dbReference type="ChEBI" id="CHEBI:28563"/>
    </ligand>
</feature>
<feature type="binding site" evidence="1">
    <location>
        <position position="59"/>
    </location>
    <ligand>
        <name>beta-D-mannose</name>
        <dbReference type="ChEBI" id="CHEBI:28563"/>
    </ligand>
</feature>
<feature type="binding site" evidence="3">
    <location>
        <position position="63"/>
    </location>
    <ligand>
        <name>beta-D-mannose</name>
        <dbReference type="ChEBI" id="CHEBI:28563"/>
    </ligand>
</feature>
<feature type="binding site" evidence="1">
    <location>
        <position position="64"/>
    </location>
    <ligand>
        <name>beta-D-mannose</name>
        <dbReference type="ChEBI" id="CHEBI:28563"/>
    </ligand>
</feature>
<feature type="binding site" evidence="3">
    <location>
        <begin position="170"/>
        <end position="174"/>
    </location>
    <ligand>
        <name>beta-D-mannose</name>
        <dbReference type="ChEBI" id="CHEBI:28563"/>
    </ligand>
</feature>
<feature type="binding site" evidence="2">
    <location>
        <position position="178"/>
    </location>
    <ligand>
        <name>beta-D-mannose</name>
        <dbReference type="ChEBI" id="CHEBI:28563"/>
    </ligand>
</feature>
<feature type="binding site" evidence="2">
    <location>
        <begin position="182"/>
        <end position="185"/>
    </location>
    <ligand>
        <name>beta-D-mannose</name>
        <dbReference type="ChEBI" id="CHEBI:28563"/>
    </ligand>
</feature>
<feature type="disulfide bond" evidence="4">
    <location>
        <begin position="54"/>
        <end position="74"/>
    </location>
</feature>
<feature type="disulfide bond" evidence="4">
    <location>
        <begin position="173"/>
        <end position="195"/>
    </location>
</feature>
<proteinExistence type="evidence at protein level"/>
<accession>Q43418</accession>
<reference key="1">
    <citation type="journal article" date="1995" name="Plant Mol. Biol.">
        <title>A corm-specific gene encodes tarin, a major globulin of taro (Colocasia esculenta L. Schott).</title>
        <authorList>
            <person name="Bezerra I.C."/>
            <person name="Castro L.A."/>
            <person name="Neshich G."/>
            <person name="de Almeida E.R."/>
            <person name="de Sa M.F."/>
            <person name="Mello L.V."/>
            <person name="Monte-Neshich D.C."/>
        </authorList>
    </citation>
    <scope>NUCLEOTIDE SEQUENCE [GENOMIC DNA]</scope>
    <scope>PROTEIN SEQUENCE OF 24-48 AND 140-170</scope>
    <source>
        <tissue>Stem</tissue>
    </source>
</reference>
<evidence type="ECO:0000250" key="1">
    <source>
        <dbReference type="UniProtKB" id="A5HMM7"/>
    </source>
</evidence>
<evidence type="ECO:0000250" key="2">
    <source>
        <dbReference type="UniProtKB" id="Q39487"/>
    </source>
</evidence>
<evidence type="ECO:0000250" key="3">
    <source>
        <dbReference type="UniProtKB" id="R9RL27"/>
    </source>
</evidence>
<evidence type="ECO:0000255" key="4">
    <source>
        <dbReference type="PROSITE-ProRule" id="PRU00038"/>
    </source>
</evidence>
<evidence type="ECO:0000269" key="5">
    <source>
    </source>
</evidence>
<evidence type="ECO:0000303" key="6">
    <source>
    </source>
</evidence>
<evidence type="ECO:0000305" key="7"/>
<comment type="function">
    <text evidence="3">Mannose-specific lectin. Shows agglutinating activity towards erythrocytes from rabbit.</text>
</comment>
<comment type="subunit">
    <text evidence="3">Forms heterotetramer of 2 chains 1 and 2 chains 2 arranged as a dimer of chain 1 and chain 2 heterodimers.</text>
</comment>
<comment type="subcellular location">
    <subcellularLocation>
        <location evidence="7">Secreted</location>
    </subcellularLocation>
</comment>
<comment type="sequence caution" evidence="7">
    <conflict type="erroneous gene model prediction">
        <sequence resource="EMBL-CDS" id="CAA53717"/>
    </conflict>
</comment>